<feature type="chain" id="PRO_0000069053" description="Adrenocorticotropic hormone receptor">
    <location>
        <begin position="1"/>
        <end position="297"/>
    </location>
</feature>
<feature type="topological domain" description="Extracellular" evidence="1">
    <location>
        <begin position="1"/>
        <end position="23"/>
    </location>
</feature>
<feature type="transmembrane region" description="Helical; Name=1" evidence="1">
    <location>
        <begin position="24"/>
        <end position="49"/>
    </location>
</feature>
<feature type="topological domain" description="Cytoplasmic" evidence="1">
    <location>
        <begin position="50"/>
        <end position="58"/>
    </location>
</feature>
<feature type="transmembrane region" description="Helical; Name=2" evidence="1">
    <location>
        <begin position="59"/>
        <end position="79"/>
    </location>
</feature>
<feature type="topological domain" description="Extracellular" evidence="1">
    <location>
        <begin position="80"/>
        <end position="104"/>
    </location>
</feature>
<feature type="transmembrane region" description="Helical; Name=3" evidence="1">
    <location>
        <begin position="105"/>
        <end position="126"/>
    </location>
</feature>
<feature type="topological domain" description="Cytoplasmic" evidence="1">
    <location>
        <begin position="127"/>
        <end position="147"/>
    </location>
</feature>
<feature type="transmembrane region" description="Helical; Name=4" evidence="1">
    <location>
        <begin position="148"/>
        <end position="168"/>
    </location>
</feature>
<feature type="topological domain" description="Extracellular" evidence="1">
    <location>
        <begin position="169"/>
        <end position="180"/>
    </location>
</feature>
<feature type="transmembrane region" description="Helical; Name=5" evidence="1">
    <location>
        <begin position="181"/>
        <end position="199"/>
    </location>
</feature>
<feature type="topological domain" description="Cytoplasmic" evidence="1">
    <location>
        <begin position="200"/>
        <end position="217"/>
    </location>
</feature>
<feature type="transmembrane region" description="Helical; Name=6" evidence="1">
    <location>
        <begin position="218"/>
        <end position="244"/>
    </location>
</feature>
<feature type="topological domain" description="Extracellular" evidence="1">
    <location>
        <begin position="245"/>
        <end position="256"/>
    </location>
</feature>
<feature type="transmembrane region" description="Helical; Name=7" evidence="1">
    <location>
        <begin position="257"/>
        <end position="278"/>
    </location>
</feature>
<feature type="topological domain" description="Cytoplasmic" evidence="1">
    <location>
        <begin position="279"/>
        <end position="297"/>
    </location>
</feature>
<feature type="lipid moiety-binding region" description="S-palmitoyl cysteine" evidence="4">
    <location>
        <position position="296"/>
    </location>
</feature>
<feature type="glycosylation site" description="N-linked (GlcNAc...) asparagine" evidence="4">
    <location>
        <position position="12"/>
    </location>
</feature>
<feature type="glycosylation site" description="N-linked (GlcNAc...) asparagine" evidence="4">
    <location>
        <position position="17"/>
    </location>
</feature>
<feature type="disulfide bond" evidence="2">
    <location>
        <begin position="21"/>
        <end position="253"/>
    </location>
</feature>
<feature type="disulfide bond" evidence="2">
    <location>
        <begin position="245"/>
        <end position="251"/>
    </location>
</feature>
<accession>Q9Z1S9</accession>
<protein>
    <recommendedName>
        <fullName>Adrenocorticotropic hormone receptor</fullName>
        <shortName>ACTH receptor</shortName>
        <shortName>ACTH-R</shortName>
    </recommendedName>
    <alternativeName>
        <fullName>Adrenocorticotropin receptor</fullName>
    </alternativeName>
    <alternativeName>
        <fullName>Melanocortin receptor 2</fullName>
        <shortName>MC2-R</shortName>
    </alternativeName>
</protein>
<keyword id="KW-1003">Cell membrane</keyword>
<keyword id="KW-1015">Disulfide bond</keyword>
<keyword id="KW-0297">G-protein coupled receptor</keyword>
<keyword id="KW-0325">Glycoprotein</keyword>
<keyword id="KW-0449">Lipoprotein</keyword>
<keyword id="KW-0472">Membrane</keyword>
<keyword id="KW-0564">Palmitate</keyword>
<keyword id="KW-0675">Receptor</keyword>
<keyword id="KW-1185">Reference proteome</keyword>
<keyword id="KW-0807">Transducer</keyword>
<keyword id="KW-0812">Transmembrane</keyword>
<keyword id="KW-1133">Transmembrane helix</keyword>
<keyword id="KW-0832">Ubl conjugation</keyword>
<name>ACTHR_CAVPO</name>
<reference key="1">
    <citation type="submission" date="1998-10" db="EMBL/GenBank/DDBJ databases">
        <title>Cloning of the guinea pig corticotropin (ACTH)-receptor gene.</title>
        <authorList>
            <person name="Fang V.S."/>
            <person name="Juan C.-C."/>
            <person name="Lin Y.-S."/>
            <person name="Liu S.-T."/>
            <person name="Ho L.-T."/>
        </authorList>
    </citation>
    <scope>NUCLEOTIDE SEQUENCE [MRNA]</scope>
    <source>
        <strain>Hartley</strain>
    </source>
</reference>
<gene>
    <name type="primary">MC2R</name>
</gene>
<comment type="function">
    <text evidence="2 3">Hormone receptor primarily expressed in adrenal cortex that plays a key role in regulating adrenocortical function (By similarity). Upon corticotropin (ACTH) binding, facilitates the release of adrenal glucocorticoids, including cortisol and corticosterone. In addition, MC2R is required for fetal and neonatal adrenal gland development (By similarity). Mechanistically, activates adenylate cyclase (cAMP), the MAPK cascade as well as the cAMP-dependent protein kinase A pathway leading to steroidogenic factor 1/NR5A1-mediated transcriptional activation (By similarity).</text>
</comment>
<comment type="subunit">
    <text evidence="2">Homodimer. Interacts with corticotropin (ACTH). Interacts with MRAP; this interaction targets MC2R to the plasma membrane. Interacts with MRAP2; competing with MRAP for binding to MC2R and impairing the binding of corticotropin (ACTH).</text>
</comment>
<comment type="subcellular location">
    <subcellularLocation>
        <location evidence="2">Cell membrane</location>
        <topology evidence="2">Multi-pass membrane protein</topology>
    </subcellularLocation>
</comment>
<comment type="PTM">
    <text evidence="2">Ubiquitinated by MGRN1 that may be involved in post-endocytic trafficking and/or degradation of internalized receptor.</text>
</comment>
<comment type="similarity">
    <text evidence="5">Belongs to the G-protein coupled receptor 1 family.</text>
</comment>
<dbReference type="EMBL" id="AF104058">
    <property type="protein sequence ID" value="AAD13614.1"/>
    <property type="molecule type" value="mRNA"/>
</dbReference>
<dbReference type="RefSeq" id="NP_001166453.1">
    <property type="nucleotide sequence ID" value="NM_001172982.1"/>
</dbReference>
<dbReference type="SMR" id="Q9Z1S9"/>
<dbReference type="FunCoup" id="Q9Z1S9">
    <property type="interactions" value="850"/>
</dbReference>
<dbReference type="STRING" id="10141.ENSCPOP00000017261"/>
<dbReference type="GlyCosmos" id="Q9Z1S9">
    <property type="glycosylation" value="2 sites, No reported glycans"/>
</dbReference>
<dbReference type="Ensembl" id="ENSCPOT00000010788.3">
    <property type="protein sequence ID" value="ENSCPOP00000017261.1"/>
    <property type="gene ID" value="ENSCPOG00000010691.4"/>
</dbReference>
<dbReference type="GeneID" id="100135574"/>
<dbReference type="KEGG" id="cpoc:100135574"/>
<dbReference type="CTD" id="4158"/>
<dbReference type="VEuPathDB" id="HostDB:ENSCPOG00000010691"/>
<dbReference type="eggNOG" id="KOG3656">
    <property type="taxonomic scope" value="Eukaryota"/>
</dbReference>
<dbReference type="GeneTree" id="ENSGT01120000271819"/>
<dbReference type="HOGENOM" id="CLU_009579_13_0_1"/>
<dbReference type="InParanoid" id="Q9Z1S9"/>
<dbReference type="OMA" id="IMCHSII"/>
<dbReference type="OrthoDB" id="9894375at2759"/>
<dbReference type="TreeFam" id="TF332646"/>
<dbReference type="Proteomes" id="UP000005447">
    <property type="component" value="Unassembled WGS sequence"/>
</dbReference>
<dbReference type="Bgee" id="ENSCPOG00000010691">
    <property type="expression patterns" value="Expressed in adrenal gland and 1 other cell type or tissue"/>
</dbReference>
<dbReference type="GO" id="GO:0005886">
    <property type="term" value="C:plasma membrane"/>
    <property type="evidence" value="ECO:0007669"/>
    <property type="project" value="UniProtKB-SubCell"/>
</dbReference>
<dbReference type="GO" id="GO:0004978">
    <property type="term" value="F:corticotropin receptor activity"/>
    <property type="evidence" value="ECO:0007669"/>
    <property type="project" value="InterPro"/>
</dbReference>
<dbReference type="GO" id="GO:0007189">
    <property type="term" value="P:adenylate cyclase-activating G protein-coupled receptor signaling pathway"/>
    <property type="evidence" value="ECO:0007669"/>
    <property type="project" value="Ensembl"/>
</dbReference>
<dbReference type="Gene3D" id="1.20.1070.10">
    <property type="entry name" value="Rhodopsin 7-helix transmembrane proteins"/>
    <property type="match status" value="1"/>
</dbReference>
<dbReference type="InterPro" id="IPR001168">
    <property type="entry name" value="ACTH_rcpt"/>
</dbReference>
<dbReference type="InterPro" id="IPR000276">
    <property type="entry name" value="GPCR_Rhodpsn"/>
</dbReference>
<dbReference type="InterPro" id="IPR017452">
    <property type="entry name" value="GPCR_Rhodpsn_7TM"/>
</dbReference>
<dbReference type="InterPro" id="IPR001671">
    <property type="entry name" value="Melcrt_ACTH_rcpt"/>
</dbReference>
<dbReference type="PANTHER" id="PTHR22750">
    <property type="entry name" value="G-PROTEIN COUPLED RECEPTOR"/>
    <property type="match status" value="1"/>
</dbReference>
<dbReference type="Pfam" id="PF00001">
    <property type="entry name" value="7tm_1"/>
    <property type="match status" value="1"/>
</dbReference>
<dbReference type="PRINTS" id="PR00520">
    <property type="entry name" value="ACTROPHINR"/>
</dbReference>
<dbReference type="PRINTS" id="PR00237">
    <property type="entry name" value="GPCRRHODOPSN"/>
</dbReference>
<dbReference type="PRINTS" id="PR00534">
    <property type="entry name" value="MCRFAMILY"/>
</dbReference>
<dbReference type="SMART" id="SM01381">
    <property type="entry name" value="7TM_GPCR_Srsx"/>
    <property type="match status" value="1"/>
</dbReference>
<dbReference type="SUPFAM" id="SSF81321">
    <property type="entry name" value="Family A G protein-coupled receptor-like"/>
    <property type="match status" value="1"/>
</dbReference>
<dbReference type="PROSITE" id="PS00237">
    <property type="entry name" value="G_PROTEIN_RECEP_F1_1"/>
    <property type="match status" value="1"/>
</dbReference>
<dbReference type="PROSITE" id="PS50262">
    <property type="entry name" value="G_PROTEIN_RECEP_F1_2"/>
    <property type="match status" value="1"/>
</dbReference>
<sequence>MKHIIHASGNVNGTARNNSDCPHVALPEEIFFIISITGVLENLIIILAVIKNKNLQFPMYFFICSLAISDMLGSLYKILESILIMFRNMGYFKPHGSFETTTDDIIDTMFILSLLGSIFSLLAIAVDRYITIFHALQYHSIVTMHRTIAVLSIIWTFCIGSGITMVLFSHHVPTVLTFTSLFPLMLVFILCLYVHMFLMARSHARNISTLPRGNMRGAITLTILLGVFIFCWAPFILHILLVTFCPNNPYCTCYISLFHVNGMLIMCNAVIDPFIYAFRSPELRSAFRRMISYSKCL</sequence>
<proteinExistence type="evidence at transcript level"/>
<evidence type="ECO:0000250" key="1"/>
<evidence type="ECO:0000250" key="2">
    <source>
        <dbReference type="UniProtKB" id="Q01718"/>
    </source>
</evidence>
<evidence type="ECO:0000250" key="3">
    <source>
        <dbReference type="UniProtKB" id="Q64326"/>
    </source>
</evidence>
<evidence type="ECO:0000255" key="4"/>
<evidence type="ECO:0000255" key="5">
    <source>
        <dbReference type="PROSITE-ProRule" id="PRU00521"/>
    </source>
</evidence>
<organism>
    <name type="scientific">Cavia porcellus</name>
    <name type="common">Guinea pig</name>
    <dbReference type="NCBI Taxonomy" id="10141"/>
    <lineage>
        <taxon>Eukaryota</taxon>
        <taxon>Metazoa</taxon>
        <taxon>Chordata</taxon>
        <taxon>Craniata</taxon>
        <taxon>Vertebrata</taxon>
        <taxon>Euteleostomi</taxon>
        <taxon>Mammalia</taxon>
        <taxon>Eutheria</taxon>
        <taxon>Euarchontoglires</taxon>
        <taxon>Glires</taxon>
        <taxon>Rodentia</taxon>
        <taxon>Hystricomorpha</taxon>
        <taxon>Caviidae</taxon>
        <taxon>Cavia</taxon>
    </lineage>
</organism>